<keyword id="KW-0028">Amino-acid biosynthesis</keyword>
<keyword id="KW-0057">Aromatic amino acid biosynthesis</keyword>
<keyword id="KW-0456">Lyase</keyword>
<keyword id="KW-0663">Pyridoxal phosphate</keyword>
<keyword id="KW-1185">Reference proteome</keyword>
<keyword id="KW-0822">Tryptophan biosynthesis</keyword>
<reference key="1">
    <citation type="journal article" date="1999" name="DNA Res.">
        <title>Complete genome sequence of an aerobic hyper-thermophilic crenarchaeon, Aeropyrum pernix K1.</title>
        <authorList>
            <person name="Kawarabayasi Y."/>
            <person name="Hino Y."/>
            <person name="Horikawa H."/>
            <person name="Yamazaki S."/>
            <person name="Haikawa Y."/>
            <person name="Jin-no K."/>
            <person name="Takahashi M."/>
            <person name="Sekine M."/>
            <person name="Baba S."/>
            <person name="Ankai A."/>
            <person name="Kosugi H."/>
            <person name="Hosoyama A."/>
            <person name="Fukui S."/>
            <person name="Nagai Y."/>
            <person name="Nishijima K."/>
            <person name="Nakazawa H."/>
            <person name="Takamiya M."/>
            <person name="Masuda S."/>
            <person name="Funahashi T."/>
            <person name="Tanaka T."/>
            <person name="Kudoh Y."/>
            <person name="Yamazaki J."/>
            <person name="Kushida N."/>
            <person name="Oguchi A."/>
            <person name="Aoki K."/>
            <person name="Kubota K."/>
            <person name="Nakamura Y."/>
            <person name="Nomura N."/>
            <person name="Sako Y."/>
            <person name="Kikuchi H."/>
        </authorList>
    </citation>
    <scope>NUCLEOTIDE SEQUENCE [LARGE SCALE GENOMIC DNA]</scope>
    <source>
        <strain>ATCC 700893 / DSM 11879 / JCM 9820 / NBRC 100138 / K1</strain>
    </source>
</reference>
<gene>
    <name type="primary">trpB2</name>
    <name type="ordered locus">APE_2316</name>
</gene>
<sequence length="449" mass="49535">MDLARYRFDLSIEEVPTSWYNILPDLPEEVPPPLNPKTGEPVDPSALAKLFPKALIEQEVSRERYIEIPGEVHEAYISFARRPTPLLRAVNLERALNTPAEIYYKYEGVTPTGSHKINTALAQAYYNKLEGVERLVTETGAGQWGSALSAAGAYFGVKVRVYMVRVSYLQKPYRRTLMELYGAEVYPSPSDKTEFGRKLLAENPNHPGSLGIAISEAIEDVINSGGNAKYSLGSVLNHVLLHQTVIGLEAEKQFREAGVYPDIMIGAVGGGSNFAGFTYPFIRHRLKGSSSTRFIAVEPKASPSMTRGVYTYDYGDTAGLTPLLKMHTLGHTYQVPPIHAGGLRYHGVAPTLSVLLKHGIVEARAYHQREVFRAAHMFAKAEGIVPAPESAHAVKAAIDEAIKARDEGRRVVIAFNLSGHGLLDLQGYREYLDGTLEDYEPEEIPASRR</sequence>
<proteinExistence type="inferred from homology"/>
<dbReference type="EC" id="4.2.1.20"/>
<dbReference type="EMBL" id="BA000002">
    <property type="protein sequence ID" value="BAA81328.1"/>
    <property type="molecule type" value="Genomic_DNA"/>
</dbReference>
<dbReference type="PIR" id="H72458">
    <property type="entry name" value="H72458"/>
</dbReference>
<dbReference type="RefSeq" id="WP_010866934.1">
    <property type="nucleotide sequence ID" value="NC_000854.2"/>
</dbReference>
<dbReference type="SMR" id="Q9Y9H2"/>
<dbReference type="STRING" id="272557.APE_2316"/>
<dbReference type="EnsemblBacteria" id="BAA81328">
    <property type="protein sequence ID" value="BAA81328"/>
    <property type="gene ID" value="APE_2316"/>
</dbReference>
<dbReference type="GeneID" id="1445341"/>
<dbReference type="KEGG" id="ape:APE_2316"/>
<dbReference type="PATRIC" id="fig|272557.25.peg.1545"/>
<dbReference type="eggNOG" id="arCOG01432">
    <property type="taxonomic scope" value="Archaea"/>
</dbReference>
<dbReference type="UniPathway" id="UPA00035">
    <property type="reaction ID" value="UER00044"/>
</dbReference>
<dbReference type="Proteomes" id="UP000002518">
    <property type="component" value="Chromosome"/>
</dbReference>
<dbReference type="GO" id="GO:0005737">
    <property type="term" value="C:cytoplasm"/>
    <property type="evidence" value="ECO:0007669"/>
    <property type="project" value="TreeGrafter"/>
</dbReference>
<dbReference type="GO" id="GO:0052684">
    <property type="term" value="F:L-serine hydro-lyase (adding indole, L-tryptophan-forming) activity"/>
    <property type="evidence" value="ECO:0007669"/>
    <property type="project" value="TreeGrafter"/>
</dbReference>
<dbReference type="GO" id="GO:0030170">
    <property type="term" value="F:pyridoxal phosphate binding"/>
    <property type="evidence" value="ECO:0007669"/>
    <property type="project" value="InterPro"/>
</dbReference>
<dbReference type="GO" id="GO:0004834">
    <property type="term" value="F:tryptophan synthase activity"/>
    <property type="evidence" value="ECO:0007669"/>
    <property type="project" value="UniProtKB-UniRule"/>
</dbReference>
<dbReference type="CDD" id="cd06446">
    <property type="entry name" value="Trp-synth_B"/>
    <property type="match status" value="1"/>
</dbReference>
<dbReference type="Gene3D" id="3.40.50.1100">
    <property type="match status" value="2"/>
</dbReference>
<dbReference type="HAMAP" id="MF_00133">
    <property type="entry name" value="Trp_synth_beta"/>
    <property type="match status" value="1"/>
</dbReference>
<dbReference type="InterPro" id="IPR006316">
    <property type="entry name" value="Trp_synth_b-like"/>
</dbReference>
<dbReference type="InterPro" id="IPR006653">
    <property type="entry name" value="Trp_synth_b_CS"/>
</dbReference>
<dbReference type="InterPro" id="IPR006654">
    <property type="entry name" value="Trp_synth_beta"/>
</dbReference>
<dbReference type="InterPro" id="IPR023026">
    <property type="entry name" value="Trp_synth_beta/beta-like"/>
</dbReference>
<dbReference type="InterPro" id="IPR001926">
    <property type="entry name" value="TrpB-like_PALP"/>
</dbReference>
<dbReference type="InterPro" id="IPR036052">
    <property type="entry name" value="TrpB-like_PALP_sf"/>
</dbReference>
<dbReference type="NCBIfam" id="NF009057">
    <property type="entry name" value="PRK12391.1"/>
    <property type="match status" value="1"/>
</dbReference>
<dbReference type="NCBIfam" id="TIGR01415">
    <property type="entry name" value="trpB_rel"/>
    <property type="match status" value="1"/>
</dbReference>
<dbReference type="PANTHER" id="PTHR48077:SF6">
    <property type="entry name" value="TRYPTOPHAN SYNTHASE"/>
    <property type="match status" value="1"/>
</dbReference>
<dbReference type="PANTHER" id="PTHR48077">
    <property type="entry name" value="TRYPTOPHAN SYNTHASE-RELATED"/>
    <property type="match status" value="1"/>
</dbReference>
<dbReference type="Pfam" id="PF00291">
    <property type="entry name" value="PALP"/>
    <property type="match status" value="1"/>
</dbReference>
<dbReference type="PIRSF" id="PIRSF001413">
    <property type="entry name" value="Trp_syn_beta"/>
    <property type="match status" value="1"/>
</dbReference>
<dbReference type="PIRSF" id="PIRSF500824">
    <property type="entry name" value="TrpB_prok"/>
    <property type="match status" value="1"/>
</dbReference>
<dbReference type="SUPFAM" id="SSF53686">
    <property type="entry name" value="Tryptophan synthase beta subunit-like PLP-dependent enzymes"/>
    <property type="match status" value="1"/>
</dbReference>
<dbReference type="PROSITE" id="PS00168">
    <property type="entry name" value="TRP_SYNTHASE_BETA"/>
    <property type="match status" value="1"/>
</dbReference>
<accession>Q9Y9H2</accession>
<evidence type="ECO:0000250" key="1"/>
<evidence type="ECO:0000305" key="2"/>
<protein>
    <recommendedName>
        <fullName>Tryptophan synthase beta chain 2</fullName>
        <ecNumber>4.2.1.20</ecNumber>
    </recommendedName>
</protein>
<comment type="function">
    <text evidence="1">The beta subunit is responsible for the synthesis of L-tryptophan from indole and L-serine.</text>
</comment>
<comment type="catalytic activity">
    <reaction>
        <text>(1S,2R)-1-C-(indol-3-yl)glycerol 3-phosphate + L-serine = D-glyceraldehyde 3-phosphate + L-tryptophan + H2O</text>
        <dbReference type="Rhea" id="RHEA:10532"/>
        <dbReference type="ChEBI" id="CHEBI:15377"/>
        <dbReference type="ChEBI" id="CHEBI:33384"/>
        <dbReference type="ChEBI" id="CHEBI:57912"/>
        <dbReference type="ChEBI" id="CHEBI:58866"/>
        <dbReference type="ChEBI" id="CHEBI:59776"/>
        <dbReference type="EC" id="4.2.1.20"/>
    </reaction>
</comment>
<comment type="cofactor">
    <cofactor evidence="1">
        <name>pyridoxal 5'-phosphate</name>
        <dbReference type="ChEBI" id="CHEBI:597326"/>
    </cofactor>
</comment>
<comment type="pathway">
    <text>Amino-acid biosynthesis; L-tryptophan biosynthesis; L-tryptophan from chorismate: step 5/5.</text>
</comment>
<comment type="subunit">
    <text evidence="1">Tetramer of two alpha and two beta chains.</text>
</comment>
<comment type="similarity">
    <text evidence="2">Belongs to the TrpB family.</text>
</comment>
<feature type="chain" id="PRO_0000099031" description="Tryptophan synthase beta chain 2">
    <location>
        <begin position="1"/>
        <end position="449"/>
    </location>
</feature>
<feature type="modified residue" description="N6-(pyridoxal phosphate)lysine" evidence="1">
    <location>
        <position position="116"/>
    </location>
</feature>
<organism>
    <name type="scientific">Aeropyrum pernix (strain ATCC 700893 / DSM 11879 / JCM 9820 / NBRC 100138 / K1)</name>
    <dbReference type="NCBI Taxonomy" id="272557"/>
    <lineage>
        <taxon>Archaea</taxon>
        <taxon>Thermoproteota</taxon>
        <taxon>Thermoprotei</taxon>
        <taxon>Desulfurococcales</taxon>
        <taxon>Desulfurococcaceae</taxon>
        <taxon>Aeropyrum</taxon>
    </lineage>
</organism>
<name>TRPB2_AERPE</name>